<feature type="chain" id="PRO_1000015190" description="S-adenosylmethionine:tRNA ribosyltransferase-isomerase">
    <location>
        <begin position="1"/>
        <end position="360"/>
    </location>
</feature>
<accession>A1V0A3</accession>
<proteinExistence type="inferred from homology"/>
<sequence>MLTLSDFDFDLPPELIAQTALPERSASRLLEVDNTNPSAPPRLIDRRFAELPACVAPGDLLVFNDTKVLKARFFGRKASGGKIEVLIERVTGERTALAQIRASKSPPPGTTLTLADAFDVTVGERVEPFFTLHFPDNCLVLIERHGRLPLPPYIEHAPDAADETRYQTVFAANPGAVAAPTAGLHFDDAVLAALEARGVERATLTLHVGAGTFQPVRVENLAEHRMHSESYELTDALVEKIAATRARGGRVIAVGTTSMRALEAAARDAQAAGRPLAATRAETDIFITPGYRFRVVDRLVTNFHLPKSTLLMLVSAFAGIETIRAAYRHAIDARYRFFSYGDAMLLTRRDDAAEATHGGA</sequence>
<name>QUEA_BURMS</name>
<evidence type="ECO:0000255" key="1">
    <source>
        <dbReference type="HAMAP-Rule" id="MF_00113"/>
    </source>
</evidence>
<comment type="function">
    <text evidence="1">Transfers and isomerizes the ribose moiety from AdoMet to the 7-aminomethyl group of 7-deazaguanine (preQ1-tRNA) to give epoxyqueuosine (oQ-tRNA).</text>
</comment>
<comment type="catalytic activity">
    <reaction evidence="1">
        <text>7-aminomethyl-7-carbaguanosine(34) in tRNA + S-adenosyl-L-methionine = epoxyqueuosine(34) in tRNA + adenine + L-methionine + 2 H(+)</text>
        <dbReference type="Rhea" id="RHEA:32155"/>
        <dbReference type="Rhea" id="RHEA-COMP:10342"/>
        <dbReference type="Rhea" id="RHEA-COMP:18582"/>
        <dbReference type="ChEBI" id="CHEBI:15378"/>
        <dbReference type="ChEBI" id="CHEBI:16708"/>
        <dbReference type="ChEBI" id="CHEBI:57844"/>
        <dbReference type="ChEBI" id="CHEBI:59789"/>
        <dbReference type="ChEBI" id="CHEBI:82833"/>
        <dbReference type="ChEBI" id="CHEBI:194443"/>
        <dbReference type="EC" id="2.4.99.17"/>
    </reaction>
</comment>
<comment type="pathway">
    <text evidence="1">tRNA modification; tRNA-queuosine biosynthesis.</text>
</comment>
<comment type="subunit">
    <text evidence="1">Monomer.</text>
</comment>
<comment type="subcellular location">
    <subcellularLocation>
        <location evidence="1">Cytoplasm</location>
    </subcellularLocation>
</comment>
<comment type="similarity">
    <text evidence="1">Belongs to the QueA family.</text>
</comment>
<organism>
    <name type="scientific">Burkholderia mallei (strain SAVP1)</name>
    <dbReference type="NCBI Taxonomy" id="320388"/>
    <lineage>
        <taxon>Bacteria</taxon>
        <taxon>Pseudomonadati</taxon>
        <taxon>Pseudomonadota</taxon>
        <taxon>Betaproteobacteria</taxon>
        <taxon>Burkholderiales</taxon>
        <taxon>Burkholderiaceae</taxon>
        <taxon>Burkholderia</taxon>
        <taxon>pseudomallei group</taxon>
    </lineage>
</organism>
<reference key="1">
    <citation type="journal article" date="2010" name="Genome Biol. Evol.">
        <title>Continuing evolution of Burkholderia mallei through genome reduction and large-scale rearrangements.</title>
        <authorList>
            <person name="Losada L."/>
            <person name="Ronning C.M."/>
            <person name="DeShazer D."/>
            <person name="Woods D."/>
            <person name="Fedorova N."/>
            <person name="Kim H.S."/>
            <person name="Shabalina S.A."/>
            <person name="Pearson T.R."/>
            <person name="Brinkac L."/>
            <person name="Tan P."/>
            <person name="Nandi T."/>
            <person name="Crabtree J."/>
            <person name="Badger J."/>
            <person name="Beckstrom-Sternberg S."/>
            <person name="Saqib M."/>
            <person name="Schutzer S.E."/>
            <person name="Keim P."/>
            <person name="Nierman W.C."/>
        </authorList>
    </citation>
    <scope>NUCLEOTIDE SEQUENCE [LARGE SCALE GENOMIC DNA]</scope>
    <source>
        <strain>SAVP1</strain>
    </source>
</reference>
<dbReference type="EC" id="2.4.99.17" evidence="1"/>
<dbReference type="EMBL" id="CP000526">
    <property type="protein sequence ID" value="ABM52282.1"/>
    <property type="molecule type" value="Genomic_DNA"/>
</dbReference>
<dbReference type="RefSeq" id="WP_004194109.1">
    <property type="nucleotide sequence ID" value="NC_008785.1"/>
</dbReference>
<dbReference type="SMR" id="A1V0A3"/>
<dbReference type="KEGG" id="bmv:BMASAVP1_A0305"/>
<dbReference type="HOGENOM" id="CLU_039110_1_0_4"/>
<dbReference type="UniPathway" id="UPA00392"/>
<dbReference type="GO" id="GO:0005737">
    <property type="term" value="C:cytoplasm"/>
    <property type="evidence" value="ECO:0007669"/>
    <property type="project" value="UniProtKB-SubCell"/>
</dbReference>
<dbReference type="GO" id="GO:0051075">
    <property type="term" value="F:S-adenosylmethionine:tRNA ribosyltransferase-isomerase activity"/>
    <property type="evidence" value="ECO:0007669"/>
    <property type="project" value="UniProtKB-EC"/>
</dbReference>
<dbReference type="GO" id="GO:0008616">
    <property type="term" value="P:queuosine biosynthetic process"/>
    <property type="evidence" value="ECO:0007669"/>
    <property type="project" value="UniProtKB-UniRule"/>
</dbReference>
<dbReference type="GO" id="GO:0002099">
    <property type="term" value="P:tRNA wobble guanine modification"/>
    <property type="evidence" value="ECO:0007669"/>
    <property type="project" value="TreeGrafter"/>
</dbReference>
<dbReference type="FunFam" id="3.40.1780.10:FF:000001">
    <property type="entry name" value="S-adenosylmethionine:tRNA ribosyltransferase-isomerase"/>
    <property type="match status" value="1"/>
</dbReference>
<dbReference type="Gene3D" id="2.40.10.240">
    <property type="entry name" value="QueA-like"/>
    <property type="match status" value="1"/>
</dbReference>
<dbReference type="Gene3D" id="3.40.1780.10">
    <property type="entry name" value="QueA-like"/>
    <property type="match status" value="1"/>
</dbReference>
<dbReference type="HAMAP" id="MF_00113">
    <property type="entry name" value="QueA"/>
    <property type="match status" value="1"/>
</dbReference>
<dbReference type="InterPro" id="IPR003699">
    <property type="entry name" value="QueA"/>
</dbReference>
<dbReference type="InterPro" id="IPR042118">
    <property type="entry name" value="QueA_dom1"/>
</dbReference>
<dbReference type="InterPro" id="IPR042119">
    <property type="entry name" value="QueA_dom2"/>
</dbReference>
<dbReference type="InterPro" id="IPR036100">
    <property type="entry name" value="QueA_sf"/>
</dbReference>
<dbReference type="NCBIfam" id="NF001140">
    <property type="entry name" value="PRK00147.1"/>
    <property type="match status" value="1"/>
</dbReference>
<dbReference type="NCBIfam" id="TIGR00113">
    <property type="entry name" value="queA"/>
    <property type="match status" value="1"/>
</dbReference>
<dbReference type="PANTHER" id="PTHR30307">
    <property type="entry name" value="S-ADENOSYLMETHIONINE:TRNA RIBOSYLTRANSFERASE-ISOMERASE"/>
    <property type="match status" value="1"/>
</dbReference>
<dbReference type="PANTHER" id="PTHR30307:SF0">
    <property type="entry name" value="S-ADENOSYLMETHIONINE:TRNA RIBOSYLTRANSFERASE-ISOMERASE"/>
    <property type="match status" value="1"/>
</dbReference>
<dbReference type="Pfam" id="PF02547">
    <property type="entry name" value="Queuosine_synth"/>
    <property type="match status" value="1"/>
</dbReference>
<dbReference type="SUPFAM" id="SSF111337">
    <property type="entry name" value="QueA-like"/>
    <property type="match status" value="1"/>
</dbReference>
<protein>
    <recommendedName>
        <fullName evidence="1">S-adenosylmethionine:tRNA ribosyltransferase-isomerase</fullName>
        <ecNumber evidence="1">2.4.99.17</ecNumber>
    </recommendedName>
    <alternativeName>
        <fullName evidence="1">Queuosine biosynthesis protein QueA</fullName>
    </alternativeName>
</protein>
<keyword id="KW-0963">Cytoplasm</keyword>
<keyword id="KW-0671">Queuosine biosynthesis</keyword>
<keyword id="KW-0949">S-adenosyl-L-methionine</keyword>
<keyword id="KW-0808">Transferase</keyword>
<gene>
    <name evidence="1" type="primary">queA</name>
    <name type="ordered locus">BMASAVP1_A0305</name>
</gene>